<protein>
    <recommendedName>
        <fullName evidence="1">Queuine tRNA-ribosyltransferase</fullName>
        <ecNumber evidence="1">2.4.2.29</ecNumber>
    </recommendedName>
    <alternativeName>
        <fullName evidence="1">Guanine insertion enzyme</fullName>
    </alternativeName>
    <alternativeName>
        <fullName evidence="1">tRNA-guanine transglycosylase</fullName>
    </alternativeName>
</protein>
<gene>
    <name evidence="1" type="primary">tgt</name>
    <name type="ordered locus">CFF8240_0980</name>
</gene>
<evidence type="ECO:0000255" key="1">
    <source>
        <dbReference type="HAMAP-Rule" id="MF_00168"/>
    </source>
</evidence>
<comment type="function">
    <text evidence="1">Catalyzes the base-exchange of a guanine (G) residue with the queuine precursor 7-aminomethyl-7-deazaguanine (PreQ1) at position 34 (anticodon wobble position) in tRNAs with GU(N) anticodons (tRNA-Asp, -Asn, -His and -Tyr). Catalysis occurs through a double-displacement mechanism. The nucleophile active site attacks the C1' of nucleotide 34 to detach the guanine base from the RNA, forming a covalent enzyme-RNA intermediate. The proton acceptor active site deprotonates the incoming PreQ1, allowing a nucleophilic attack on the C1' of the ribose to form the product. After dissociation, two additional enzymatic reactions on the tRNA convert PreQ1 to queuine (Q), resulting in the hypermodified nucleoside queuosine (7-(((4,5-cis-dihydroxy-2-cyclopenten-1-yl)amino)methyl)-7-deazaguanosine).</text>
</comment>
<comment type="catalytic activity">
    <reaction evidence="1">
        <text>7-aminomethyl-7-carbaguanine + guanosine(34) in tRNA = 7-aminomethyl-7-carbaguanosine(34) in tRNA + guanine</text>
        <dbReference type="Rhea" id="RHEA:24104"/>
        <dbReference type="Rhea" id="RHEA-COMP:10341"/>
        <dbReference type="Rhea" id="RHEA-COMP:10342"/>
        <dbReference type="ChEBI" id="CHEBI:16235"/>
        <dbReference type="ChEBI" id="CHEBI:58703"/>
        <dbReference type="ChEBI" id="CHEBI:74269"/>
        <dbReference type="ChEBI" id="CHEBI:82833"/>
        <dbReference type="EC" id="2.4.2.29"/>
    </reaction>
</comment>
<comment type="cofactor">
    <cofactor evidence="1">
        <name>Zn(2+)</name>
        <dbReference type="ChEBI" id="CHEBI:29105"/>
    </cofactor>
    <text evidence="1">Binds 1 zinc ion per subunit.</text>
</comment>
<comment type="pathway">
    <text evidence="1">tRNA modification; tRNA-queuosine biosynthesis.</text>
</comment>
<comment type="subunit">
    <text evidence="1">Homodimer. Within each dimer, one monomer is responsible for RNA recognition and catalysis, while the other monomer binds to the replacement base PreQ1.</text>
</comment>
<comment type="similarity">
    <text evidence="1">Belongs to the queuine tRNA-ribosyltransferase family.</text>
</comment>
<keyword id="KW-0328">Glycosyltransferase</keyword>
<keyword id="KW-0479">Metal-binding</keyword>
<keyword id="KW-0671">Queuosine biosynthesis</keyword>
<keyword id="KW-0808">Transferase</keyword>
<keyword id="KW-0819">tRNA processing</keyword>
<keyword id="KW-0862">Zinc</keyword>
<dbReference type="EC" id="2.4.2.29" evidence="1"/>
<dbReference type="EMBL" id="CP000487">
    <property type="protein sequence ID" value="ABK81825.1"/>
    <property type="molecule type" value="Genomic_DNA"/>
</dbReference>
<dbReference type="RefSeq" id="WP_002849532.1">
    <property type="nucleotide sequence ID" value="NC_008599.1"/>
</dbReference>
<dbReference type="SMR" id="A0RPL5"/>
<dbReference type="GeneID" id="61064810"/>
<dbReference type="KEGG" id="cff:CFF8240_0980"/>
<dbReference type="eggNOG" id="COG0343">
    <property type="taxonomic scope" value="Bacteria"/>
</dbReference>
<dbReference type="HOGENOM" id="CLU_022060_0_1_7"/>
<dbReference type="UniPathway" id="UPA00392"/>
<dbReference type="Proteomes" id="UP000000760">
    <property type="component" value="Chromosome"/>
</dbReference>
<dbReference type="GO" id="GO:0005829">
    <property type="term" value="C:cytosol"/>
    <property type="evidence" value="ECO:0007669"/>
    <property type="project" value="TreeGrafter"/>
</dbReference>
<dbReference type="GO" id="GO:0046872">
    <property type="term" value="F:metal ion binding"/>
    <property type="evidence" value="ECO:0007669"/>
    <property type="project" value="UniProtKB-KW"/>
</dbReference>
<dbReference type="GO" id="GO:0008479">
    <property type="term" value="F:tRNA-guanosine(34) queuine transglycosylase activity"/>
    <property type="evidence" value="ECO:0007669"/>
    <property type="project" value="UniProtKB-UniRule"/>
</dbReference>
<dbReference type="GO" id="GO:0008616">
    <property type="term" value="P:queuosine biosynthetic process"/>
    <property type="evidence" value="ECO:0007669"/>
    <property type="project" value="UniProtKB-UniRule"/>
</dbReference>
<dbReference type="GO" id="GO:0101030">
    <property type="term" value="P:tRNA-guanine transglycosylation"/>
    <property type="evidence" value="ECO:0007669"/>
    <property type="project" value="InterPro"/>
</dbReference>
<dbReference type="Gene3D" id="3.20.20.105">
    <property type="entry name" value="Queuine tRNA-ribosyltransferase-like"/>
    <property type="match status" value="1"/>
</dbReference>
<dbReference type="HAMAP" id="MF_00168">
    <property type="entry name" value="Q_tRNA_Tgt"/>
    <property type="match status" value="1"/>
</dbReference>
<dbReference type="InterPro" id="IPR004803">
    <property type="entry name" value="TGT"/>
</dbReference>
<dbReference type="InterPro" id="IPR036511">
    <property type="entry name" value="TGT-like_sf"/>
</dbReference>
<dbReference type="InterPro" id="IPR002616">
    <property type="entry name" value="tRNA_ribo_trans-like"/>
</dbReference>
<dbReference type="NCBIfam" id="TIGR00430">
    <property type="entry name" value="Q_tRNA_tgt"/>
    <property type="match status" value="1"/>
</dbReference>
<dbReference type="NCBIfam" id="TIGR00449">
    <property type="entry name" value="tgt_general"/>
    <property type="match status" value="1"/>
</dbReference>
<dbReference type="PANTHER" id="PTHR43530">
    <property type="entry name" value="QUEUINE TRNA-RIBOSYLTRANSFERASE CATALYTIC SUBUNIT 1"/>
    <property type="match status" value="1"/>
</dbReference>
<dbReference type="PANTHER" id="PTHR43530:SF1">
    <property type="entry name" value="QUEUINE TRNA-RIBOSYLTRANSFERASE CATALYTIC SUBUNIT 1"/>
    <property type="match status" value="1"/>
</dbReference>
<dbReference type="Pfam" id="PF01702">
    <property type="entry name" value="TGT"/>
    <property type="match status" value="1"/>
</dbReference>
<dbReference type="SUPFAM" id="SSF51713">
    <property type="entry name" value="tRNA-guanine transglycosylase"/>
    <property type="match status" value="1"/>
</dbReference>
<proteinExistence type="inferred from homology"/>
<feature type="chain" id="PRO_1000016769" description="Queuine tRNA-ribosyltransferase">
    <location>
        <begin position="1"/>
        <end position="374"/>
    </location>
</feature>
<feature type="region of interest" description="RNA binding" evidence="1">
    <location>
        <begin position="251"/>
        <end position="257"/>
    </location>
</feature>
<feature type="region of interest" description="RNA binding; important for wobble base 34 recognition" evidence="1">
    <location>
        <begin position="275"/>
        <end position="279"/>
    </location>
</feature>
<feature type="active site" description="Proton acceptor" evidence="1">
    <location>
        <position position="90"/>
    </location>
</feature>
<feature type="active site" description="Nucleophile" evidence="1">
    <location>
        <position position="270"/>
    </location>
</feature>
<feature type="binding site" evidence="1">
    <location>
        <begin position="90"/>
        <end position="94"/>
    </location>
    <ligand>
        <name>substrate</name>
    </ligand>
</feature>
<feature type="binding site" evidence="1">
    <location>
        <position position="144"/>
    </location>
    <ligand>
        <name>substrate</name>
    </ligand>
</feature>
<feature type="binding site" evidence="1">
    <location>
        <position position="193"/>
    </location>
    <ligand>
        <name>substrate</name>
    </ligand>
</feature>
<feature type="binding site" evidence="1">
    <location>
        <position position="220"/>
    </location>
    <ligand>
        <name>substrate</name>
    </ligand>
</feature>
<feature type="binding site" evidence="1">
    <location>
        <position position="308"/>
    </location>
    <ligand>
        <name>Zn(2+)</name>
        <dbReference type="ChEBI" id="CHEBI:29105"/>
    </ligand>
</feature>
<feature type="binding site" evidence="1">
    <location>
        <position position="310"/>
    </location>
    <ligand>
        <name>Zn(2+)</name>
        <dbReference type="ChEBI" id="CHEBI:29105"/>
    </ligand>
</feature>
<feature type="binding site" evidence="1">
    <location>
        <position position="313"/>
    </location>
    <ligand>
        <name>Zn(2+)</name>
        <dbReference type="ChEBI" id="CHEBI:29105"/>
    </ligand>
</feature>
<feature type="binding site" evidence="1">
    <location>
        <position position="339"/>
    </location>
    <ligand>
        <name>Zn(2+)</name>
        <dbReference type="ChEBI" id="CHEBI:29105"/>
    </ligand>
</feature>
<reference key="1">
    <citation type="submission" date="2006-11" db="EMBL/GenBank/DDBJ databases">
        <title>Sequence of Campylobacter fetus subsp. fetus 82-40.</title>
        <authorList>
            <person name="Fouts D.E."/>
            <person name="Nelson K.E."/>
        </authorList>
    </citation>
    <scope>NUCLEOTIDE SEQUENCE [LARGE SCALE GENOMIC DNA]</scope>
    <source>
        <strain>82-40</strain>
    </source>
</reference>
<organism>
    <name type="scientific">Campylobacter fetus subsp. fetus (strain 82-40)</name>
    <dbReference type="NCBI Taxonomy" id="360106"/>
    <lineage>
        <taxon>Bacteria</taxon>
        <taxon>Pseudomonadati</taxon>
        <taxon>Campylobacterota</taxon>
        <taxon>Epsilonproteobacteria</taxon>
        <taxon>Campylobacterales</taxon>
        <taxon>Campylobacteraceae</taxon>
        <taxon>Campylobacter</taxon>
    </lineage>
</organism>
<accession>A0RPL5</accession>
<name>TGT_CAMFF</name>
<sequence>MNFKIDKTDGNARACTLQTAHSTIQTPIFMPVGTLGAVKSLDAIDLKEILDAKIILANTYHLYLRPTSKVVREFGGLHGFSKFDRSFLTDSGGFQAFSLSKISKPDENGIKFKSHIDGSMHYFTPKSVLDTQYDLSSDIMMILDDLVALPATKERIDLSIKRTINWAKIACEYHKSNKQKSVGIDQNIFGIIQGGTDYNARKLCAEALCEMEFDGLAIGGLSVGESNEEMYDTVEALMPFIDKNRPRYLMGVGTPEDLVQNVERGVDMFDCVMPTRNARNGTLFTSFGKINIKSAAFIKDDNKIDPECDCYTCSNFSRGYLNHLYKARELTFFRLASLHNLHYYLNLVKQMREAIMQGKFKEFKREFYAKRGMI</sequence>